<keyword id="KW-1185">Reference proteome</keyword>
<reference key="1">
    <citation type="journal article" date="2008" name="PLoS ONE">
        <title>Genome sequence of the saprophyte Leptospira biflexa provides insights into the evolution of Leptospira and the pathogenesis of leptospirosis.</title>
        <authorList>
            <person name="Picardeau M."/>
            <person name="Bulach D.M."/>
            <person name="Bouchier C."/>
            <person name="Zuerner R.L."/>
            <person name="Zidane N."/>
            <person name="Wilson P.J."/>
            <person name="Creno S."/>
            <person name="Kuczek E.S."/>
            <person name="Bommezzadri S."/>
            <person name="Davis J.C."/>
            <person name="McGrath A."/>
            <person name="Johnson M.J."/>
            <person name="Boursaux-Eude C."/>
            <person name="Seemann T."/>
            <person name="Rouy Z."/>
            <person name="Coppel R.L."/>
            <person name="Rood J.I."/>
            <person name="Lajus A."/>
            <person name="Davies J.K."/>
            <person name="Medigue C."/>
            <person name="Adler B."/>
        </authorList>
    </citation>
    <scope>NUCLEOTIDE SEQUENCE [LARGE SCALE GENOMIC DNA]</scope>
    <source>
        <strain>Patoc 1 / ATCC 23582 / Paris</strain>
    </source>
</reference>
<sequence>MSSFPVLNVGFSNVVFVSKILTILLADSAGAKRLRTEAKSENRLIDATCGRKTRSVLVLESGHILLSAIRPESLSKRLETGDNHIGEGEEESED</sequence>
<dbReference type="EMBL" id="CP000786">
    <property type="protein sequence ID" value="ABZ97074.1"/>
    <property type="molecule type" value="Genomic_DNA"/>
</dbReference>
<dbReference type="RefSeq" id="WP_012387957.1">
    <property type="nucleotide sequence ID" value="NC_010602.1"/>
</dbReference>
<dbReference type="SMR" id="B0SMD0"/>
<dbReference type="STRING" id="456481.LEPBI_I0950"/>
<dbReference type="KEGG" id="lbi:LEPBI_I0950"/>
<dbReference type="HOGENOM" id="CLU_165326_0_0_12"/>
<dbReference type="OrthoDB" id="5432174at2"/>
<dbReference type="BioCyc" id="LBIF456481:LEPBI_RS04660-MONOMER"/>
<dbReference type="Proteomes" id="UP000001847">
    <property type="component" value="Chromosome I"/>
</dbReference>
<dbReference type="HAMAP" id="MF_01503">
    <property type="entry name" value="RemA"/>
    <property type="match status" value="1"/>
</dbReference>
<dbReference type="InterPro" id="IPR007169">
    <property type="entry name" value="RemA-like"/>
</dbReference>
<dbReference type="NCBIfam" id="NF003315">
    <property type="entry name" value="PRK04323.1"/>
    <property type="match status" value="1"/>
</dbReference>
<dbReference type="PANTHER" id="PTHR38449:SF1">
    <property type="entry name" value="REGULATORY PROTEIN SSL2874-RELATED"/>
    <property type="match status" value="1"/>
</dbReference>
<dbReference type="PANTHER" id="PTHR38449">
    <property type="entry name" value="REGULATORY PROTEIN TM_1690-RELATED"/>
    <property type="match status" value="1"/>
</dbReference>
<dbReference type="Pfam" id="PF04025">
    <property type="entry name" value="RemA-like"/>
    <property type="match status" value="1"/>
</dbReference>
<proteinExistence type="inferred from homology"/>
<protein>
    <recommendedName>
        <fullName evidence="1">Putative regulatory protein LEPBI_I0950</fullName>
    </recommendedName>
</protein>
<evidence type="ECO:0000255" key="1">
    <source>
        <dbReference type="HAMAP-Rule" id="MF_01503"/>
    </source>
</evidence>
<feature type="chain" id="PRO_1000198223" description="Putative regulatory protein LEPBI_I0950">
    <location>
        <begin position="1"/>
        <end position="94"/>
    </location>
</feature>
<accession>B0SMD0</accession>
<gene>
    <name type="ordered locus">LEPBI_I0950</name>
</gene>
<organism>
    <name type="scientific">Leptospira biflexa serovar Patoc (strain Patoc 1 / ATCC 23582 / Paris)</name>
    <dbReference type="NCBI Taxonomy" id="456481"/>
    <lineage>
        <taxon>Bacteria</taxon>
        <taxon>Pseudomonadati</taxon>
        <taxon>Spirochaetota</taxon>
        <taxon>Spirochaetia</taxon>
        <taxon>Leptospirales</taxon>
        <taxon>Leptospiraceae</taxon>
        <taxon>Leptospira</taxon>
    </lineage>
</organism>
<name>Y950_LEPBP</name>
<comment type="similarity">
    <text evidence="1">Belongs to the RemA family.</text>
</comment>